<organism>
    <name type="scientific">Streptococcus pyogenes serotype M3 (strain ATCC BAA-595 / MGAS315)</name>
    <dbReference type="NCBI Taxonomy" id="198466"/>
    <lineage>
        <taxon>Bacteria</taxon>
        <taxon>Bacillati</taxon>
        <taxon>Bacillota</taxon>
        <taxon>Bacilli</taxon>
        <taxon>Lactobacillales</taxon>
        <taxon>Streptococcaceae</taxon>
        <taxon>Streptococcus</taxon>
    </lineage>
</organism>
<comment type="function">
    <text evidence="1">Bidirectionally degrades single-stranded DNA into large acid-insoluble oligonucleotides, which are then degraded further into small acid-soluble oligonucleotides.</text>
</comment>
<comment type="catalytic activity">
    <reaction evidence="1">
        <text>Exonucleolytic cleavage in either 5'- to 3'- or 3'- to 5'-direction to yield nucleoside 5'-phosphates.</text>
        <dbReference type="EC" id="3.1.11.6"/>
    </reaction>
</comment>
<comment type="subunit">
    <text evidence="1">Heterooligomer composed of large and small subunits.</text>
</comment>
<comment type="subcellular location">
    <subcellularLocation>
        <location evidence="1">Cytoplasm</location>
    </subcellularLocation>
</comment>
<comment type="similarity">
    <text evidence="1">Belongs to the XseA family.</text>
</comment>
<proteinExistence type="inferred from homology"/>
<sequence>MADYLTVTHLTKYLKLKFDRDPYLERVYLTGQVSNFRKRPTHQYFSLKDESAVIQATMWAGVYKKLGFDLEEGMKINVIGRVQLYEPSGSYSIVIEKAEPDGIGALALQFEQLKKKLTAEGYFEQKHKQPLPQFVSKIGVITSPSGAVIRDIITTVSRRFPGVEILLFPTKVQGDGAAQEVVANIRRANQREDLDLLIVGRGGGSIEDLWAFNEEIVVQAIFESQLPVISSVGHETDTTLADFVADRRAATPTAAAELATPITKTDLMSWIVERQNRSYQACLRRIKQRQEWVDKLSQSVIFRQPERLYDAYLQKIDRLSMTLMNTMKDRLSSAKENKVQLDHALANSQLQTKIERYQDRVATAKRLLMANMASQYDSQLARFEKAQDALLSLDASRIIARGYAMIEKNQALVASVSQITKGDQLTIKMRDGQLDVEVKDVKNENI</sequence>
<dbReference type="EC" id="3.1.11.6" evidence="1"/>
<dbReference type="EMBL" id="AE014074">
    <property type="protein sequence ID" value="AAM79763.1"/>
    <property type="molecule type" value="Genomic_DNA"/>
</dbReference>
<dbReference type="RefSeq" id="WP_002992349.1">
    <property type="nucleotide sequence ID" value="NC_004070.1"/>
</dbReference>
<dbReference type="SMR" id="P0DH50"/>
<dbReference type="GeneID" id="69900607"/>
<dbReference type="KEGG" id="spg:SpyM3_1156"/>
<dbReference type="HOGENOM" id="CLU_023625_3_1_9"/>
<dbReference type="Proteomes" id="UP000000564">
    <property type="component" value="Chromosome"/>
</dbReference>
<dbReference type="GO" id="GO:0005737">
    <property type="term" value="C:cytoplasm"/>
    <property type="evidence" value="ECO:0007669"/>
    <property type="project" value="UniProtKB-SubCell"/>
</dbReference>
<dbReference type="GO" id="GO:0009318">
    <property type="term" value="C:exodeoxyribonuclease VII complex"/>
    <property type="evidence" value="ECO:0007669"/>
    <property type="project" value="InterPro"/>
</dbReference>
<dbReference type="GO" id="GO:0008855">
    <property type="term" value="F:exodeoxyribonuclease VII activity"/>
    <property type="evidence" value="ECO:0007669"/>
    <property type="project" value="UniProtKB-UniRule"/>
</dbReference>
<dbReference type="GO" id="GO:0003676">
    <property type="term" value="F:nucleic acid binding"/>
    <property type="evidence" value="ECO:0007669"/>
    <property type="project" value="InterPro"/>
</dbReference>
<dbReference type="GO" id="GO:0006308">
    <property type="term" value="P:DNA catabolic process"/>
    <property type="evidence" value="ECO:0007669"/>
    <property type="project" value="UniProtKB-UniRule"/>
</dbReference>
<dbReference type="CDD" id="cd04489">
    <property type="entry name" value="ExoVII_LU_OBF"/>
    <property type="match status" value="1"/>
</dbReference>
<dbReference type="HAMAP" id="MF_00378">
    <property type="entry name" value="Exonuc_7_L"/>
    <property type="match status" value="1"/>
</dbReference>
<dbReference type="InterPro" id="IPR003753">
    <property type="entry name" value="Exonuc_VII_L"/>
</dbReference>
<dbReference type="InterPro" id="IPR020579">
    <property type="entry name" value="Exonuc_VII_lsu_C"/>
</dbReference>
<dbReference type="InterPro" id="IPR025824">
    <property type="entry name" value="OB-fold_nuc-bd_dom"/>
</dbReference>
<dbReference type="NCBIfam" id="TIGR00237">
    <property type="entry name" value="xseA"/>
    <property type="match status" value="1"/>
</dbReference>
<dbReference type="PANTHER" id="PTHR30008">
    <property type="entry name" value="EXODEOXYRIBONUCLEASE 7 LARGE SUBUNIT"/>
    <property type="match status" value="1"/>
</dbReference>
<dbReference type="PANTHER" id="PTHR30008:SF0">
    <property type="entry name" value="EXODEOXYRIBONUCLEASE 7 LARGE SUBUNIT"/>
    <property type="match status" value="1"/>
</dbReference>
<dbReference type="Pfam" id="PF02601">
    <property type="entry name" value="Exonuc_VII_L"/>
    <property type="match status" value="1"/>
</dbReference>
<dbReference type="Pfam" id="PF13742">
    <property type="entry name" value="tRNA_anti_2"/>
    <property type="match status" value="1"/>
</dbReference>
<evidence type="ECO:0000255" key="1">
    <source>
        <dbReference type="HAMAP-Rule" id="MF_00378"/>
    </source>
</evidence>
<reference key="1">
    <citation type="journal article" date="2002" name="Proc. Natl. Acad. Sci. U.S.A.">
        <title>Genome sequence of a serotype M3 strain of group A Streptococcus: phage-encoded toxins, the high-virulence phenotype, and clone emergence.</title>
        <authorList>
            <person name="Beres S.B."/>
            <person name="Sylva G.L."/>
            <person name="Barbian K.D."/>
            <person name="Lei B."/>
            <person name="Hoff J.S."/>
            <person name="Mammarella N.D."/>
            <person name="Liu M.-Y."/>
            <person name="Smoot J.C."/>
            <person name="Porcella S.F."/>
            <person name="Parkins L.D."/>
            <person name="Campbell D.S."/>
            <person name="Smith T.M."/>
            <person name="McCormick J.K."/>
            <person name="Leung D.Y.M."/>
            <person name="Schlievert P.M."/>
            <person name="Musser J.M."/>
        </authorList>
    </citation>
    <scope>NUCLEOTIDE SEQUENCE [LARGE SCALE GENOMIC DNA]</scope>
    <source>
        <strain>ATCC BAA-595 / MGAS315</strain>
    </source>
</reference>
<gene>
    <name evidence="1" type="primary">xseA</name>
    <name type="ordered locus">SpyM3_1156</name>
</gene>
<feature type="chain" id="PRO_0000197894" description="Exodeoxyribonuclease 7 large subunit">
    <location>
        <begin position="1"/>
        <end position="446"/>
    </location>
</feature>
<name>EX7L_STRP3</name>
<keyword id="KW-0963">Cytoplasm</keyword>
<keyword id="KW-0269">Exonuclease</keyword>
<keyword id="KW-0378">Hydrolase</keyword>
<keyword id="KW-0540">Nuclease</keyword>
<protein>
    <recommendedName>
        <fullName evidence="1">Exodeoxyribonuclease 7 large subunit</fullName>
        <ecNumber evidence="1">3.1.11.6</ecNumber>
    </recommendedName>
    <alternativeName>
        <fullName evidence="1">Exodeoxyribonuclease VII large subunit</fullName>
        <shortName evidence="1">Exonuclease VII large subunit</shortName>
    </alternativeName>
</protein>
<accession>P0DH50</accession>
<accession>P67453</accession>
<accession>Q99YX3</accession>